<keyword id="KW-0479">Metal-binding</keyword>
<keyword id="KW-0665">Pyrimidine biosynthesis</keyword>
<keyword id="KW-0862">Zinc</keyword>
<accession>B5F445</accession>
<comment type="function">
    <text evidence="1">Involved in allosteric regulation of aspartate carbamoyltransferase.</text>
</comment>
<comment type="cofactor">
    <cofactor evidence="1">
        <name>Zn(2+)</name>
        <dbReference type="ChEBI" id="CHEBI:29105"/>
    </cofactor>
    <text evidence="1">Binds 1 zinc ion per subunit.</text>
</comment>
<comment type="subunit">
    <text evidence="1">Contains catalytic and regulatory chains.</text>
</comment>
<comment type="similarity">
    <text evidence="1">Belongs to the PyrI family.</text>
</comment>
<proteinExistence type="inferred from homology"/>
<protein>
    <recommendedName>
        <fullName evidence="1">Aspartate carbamoyltransferase regulatory chain</fullName>
    </recommendedName>
</protein>
<reference key="1">
    <citation type="journal article" date="2011" name="J. Bacteriol.">
        <title>Comparative genomics of 28 Salmonella enterica isolates: evidence for CRISPR-mediated adaptive sublineage evolution.</title>
        <authorList>
            <person name="Fricke W.F."/>
            <person name="Mammel M.K."/>
            <person name="McDermott P.F."/>
            <person name="Tartera C."/>
            <person name="White D.G."/>
            <person name="Leclerc J.E."/>
            <person name="Ravel J."/>
            <person name="Cebula T.A."/>
        </authorList>
    </citation>
    <scope>NUCLEOTIDE SEQUENCE [LARGE SCALE GENOMIC DNA]</scope>
    <source>
        <strain>SL483</strain>
    </source>
</reference>
<feature type="chain" id="PRO_1000088833" description="Aspartate carbamoyltransferase regulatory chain">
    <location>
        <begin position="1"/>
        <end position="153"/>
    </location>
</feature>
<feature type="binding site" evidence="1">
    <location>
        <position position="109"/>
    </location>
    <ligand>
        <name>Zn(2+)</name>
        <dbReference type="ChEBI" id="CHEBI:29105"/>
    </ligand>
</feature>
<feature type="binding site" evidence="1">
    <location>
        <position position="114"/>
    </location>
    <ligand>
        <name>Zn(2+)</name>
        <dbReference type="ChEBI" id="CHEBI:29105"/>
    </ligand>
</feature>
<feature type="binding site" evidence="1">
    <location>
        <position position="138"/>
    </location>
    <ligand>
        <name>Zn(2+)</name>
        <dbReference type="ChEBI" id="CHEBI:29105"/>
    </ligand>
</feature>
<feature type="binding site" evidence="1">
    <location>
        <position position="141"/>
    </location>
    <ligand>
        <name>Zn(2+)</name>
        <dbReference type="ChEBI" id="CHEBI:29105"/>
    </ligand>
</feature>
<dbReference type="EMBL" id="CP001138">
    <property type="protein sequence ID" value="ACH49459.1"/>
    <property type="molecule type" value="Genomic_DNA"/>
</dbReference>
<dbReference type="RefSeq" id="WP_000148570.1">
    <property type="nucleotide sequence ID" value="NC_011149.1"/>
</dbReference>
<dbReference type="SMR" id="B5F445"/>
<dbReference type="KEGG" id="sea:SeAg_B4743"/>
<dbReference type="HOGENOM" id="CLU_128576_0_0_6"/>
<dbReference type="Proteomes" id="UP000008819">
    <property type="component" value="Chromosome"/>
</dbReference>
<dbReference type="GO" id="GO:0009347">
    <property type="term" value="C:aspartate carbamoyltransferase complex"/>
    <property type="evidence" value="ECO:0007669"/>
    <property type="project" value="InterPro"/>
</dbReference>
<dbReference type="GO" id="GO:0046872">
    <property type="term" value="F:metal ion binding"/>
    <property type="evidence" value="ECO:0007669"/>
    <property type="project" value="UniProtKB-KW"/>
</dbReference>
<dbReference type="GO" id="GO:0006207">
    <property type="term" value="P:'de novo' pyrimidine nucleobase biosynthetic process"/>
    <property type="evidence" value="ECO:0007669"/>
    <property type="project" value="InterPro"/>
</dbReference>
<dbReference type="GO" id="GO:0006221">
    <property type="term" value="P:pyrimidine nucleotide biosynthetic process"/>
    <property type="evidence" value="ECO:0007669"/>
    <property type="project" value="UniProtKB-UniRule"/>
</dbReference>
<dbReference type="FunFam" id="2.30.30.20:FF:000001">
    <property type="entry name" value="Aspartate carbamoyltransferase regulatory chain"/>
    <property type="match status" value="1"/>
</dbReference>
<dbReference type="FunFam" id="3.30.70.140:FF:000001">
    <property type="entry name" value="Aspartate carbamoyltransferase regulatory chain"/>
    <property type="match status" value="1"/>
</dbReference>
<dbReference type="Gene3D" id="2.30.30.20">
    <property type="entry name" value="Aspartate carbamoyltransferase regulatory subunit, C-terminal domain"/>
    <property type="match status" value="1"/>
</dbReference>
<dbReference type="Gene3D" id="3.30.70.140">
    <property type="entry name" value="Aspartate carbamoyltransferase regulatory subunit, N-terminal domain"/>
    <property type="match status" value="1"/>
</dbReference>
<dbReference type="HAMAP" id="MF_00002">
    <property type="entry name" value="Asp_carb_tr_reg"/>
    <property type="match status" value="1"/>
</dbReference>
<dbReference type="InterPro" id="IPR020545">
    <property type="entry name" value="Asp_carbamoyltransf_reg_N"/>
</dbReference>
<dbReference type="InterPro" id="IPR002801">
    <property type="entry name" value="Asp_carbamoylTrfase_reg"/>
</dbReference>
<dbReference type="InterPro" id="IPR020542">
    <property type="entry name" value="Asp_carbamoyltrfase_reg_C"/>
</dbReference>
<dbReference type="InterPro" id="IPR036792">
    <property type="entry name" value="Asp_carbatrfase_reg_C_sf"/>
</dbReference>
<dbReference type="InterPro" id="IPR036793">
    <property type="entry name" value="Asp_carbatrfase_reg_N_sf"/>
</dbReference>
<dbReference type="NCBIfam" id="TIGR00240">
    <property type="entry name" value="ATCase_reg"/>
    <property type="match status" value="1"/>
</dbReference>
<dbReference type="PANTHER" id="PTHR35805">
    <property type="entry name" value="ASPARTATE CARBAMOYLTRANSFERASE REGULATORY CHAIN"/>
    <property type="match status" value="1"/>
</dbReference>
<dbReference type="PANTHER" id="PTHR35805:SF1">
    <property type="entry name" value="ASPARTATE CARBAMOYLTRANSFERASE REGULATORY CHAIN"/>
    <property type="match status" value="1"/>
</dbReference>
<dbReference type="Pfam" id="PF01948">
    <property type="entry name" value="PyrI"/>
    <property type="match status" value="1"/>
</dbReference>
<dbReference type="Pfam" id="PF02748">
    <property type="entry name" value="PyrI_C"/>
    <property type="match status" value="1"/>
</dbReference>
<dbReference type="SUPFAM" id="SSF57825">
    <property type="entry name" value="Aspartate carbamoyltransferase, Regulatory-chain, C-terminal domain"/>
    <property type="match status" value="1"/>
</dbReference>
<dbReference type="SUPFAM" id="SSF54893">
    <property type="entry name" value="Aspartate carbamoyltransferase, Regulatory-chain, N-terminal domain"/>
    <property type="match status" value="1"/>
</dbReference>
<name>PYRI_SALA4</name>
<gene>
    <name evidence="1" type="primary">pyrI</name>
    <name type="ordered locus">SeAg_B4743</name>
</gene>
<evidence type="ECO:0000255" key="1">
    <source>
        <dbReference type="HAMAP-Rule" id="MF_00002"/>
    </source>
</evidence>
<organism>
    <name type="scientific">Salmonella agona (strain SL483)</name>
    <dbReference type="NCBI Taxonomy" id="454166"/>
    <lineage>
        <taxon>Bacteria</taxon>
        <taxon>Pseudomonadati</taxon>
        <taxon>Pseudomonadota</taxon>
        <taxon>Gammaproteobacteria</taxon>
        <taxon>Enterobacterales</taxon>
        <taxon>Enterobacteriaceae</taxon>
        <taxon>Salmonella</taxon>
    </lineage>
</organism>
<sequence length="153" mass="17087">MTHDNKLQVEAIKCGTVIDHIPAQVGFKLLSLFKLTETDQRITIGLNLPSGEMGRKDLIKIENTFLTEEQVNQLALYAPQATVNRIDNYDVVGKSRPSLPERINNVLVCPNSNCISHAEPVSSSFAVKKRANDIALKCKYCEKEFSHYVVLAN</sequence>